<accession>Q2GKG5</accession>
<comment type="function">
    <text evidence="1">Catalyzes the formation of phosphatidylethanolamine (PtdEtn) from phosphatidylserine (PtdSer).</text>
</comment>
<comment type="catalytic activity">
    <reaction evidence="1">
        <text>a 1,2-diacyl-sn-glycero-3-phospho-L-serine + H(+) = a 1,2-diacyl-sn-glycero-3-phosphoethanolamine + CO2</text>
        <dbReference type="Rhea" id="RHEA:20828"/>
        <dbReference type="ChEBI" id="CHEBI:15378"/>
        <dbReference type="ChEBI" id="CHEBI:16526"/>
        <dbReference type="ChEBI" id="CHEBI:57262"/>
        <dbReference type="ChEBI" id="CHEBI:64612"/>
        <dbReference type="EC" id="4.1.1.65"/>
    </reaction>
</comment>
<comment type="cofactor">
    <cofactor evidence="1">
        <name>pyruvate</name>
        <dbReference type="ChEBI" id="CHEBI:15361"/>
    </cofactor>
    <text evidence="1">Binds 1 pyruvoyl group covalently per subunit.</text>
</comment>
<comment type="pathway">
    <text evidence="1">Phospholipid metabolism; phosphatidylethanolamine biosynthesis; phosphatidylethanolamine from CDP-diacylglycerol: step 2/2.</text>
</comment>
<comment type="subunit">
    <text evidence="1">Heterodimer of a large membrane-associated beta subunit and a small pyruvoyl-containing alpha subunit.</text>
</comment>
<comment type="subcellular location">
    <subcellularLocation>
        <location evidence="1">Cell membrane</location>
        <topology evidence="1">Peripheral membrane protein</topology>
    </subcellularLocation>
</comment>
<comment type="PTM">
    <text evidence="1">Is synthesized initially as an inactive proenzyme. Formation of the active enzyme involves a self-maturation process in which the active site pyruvoyl group is generated from an internal serine residue via an autocatalytic post-translational modification. Two non-identical subunits are generated from the proenzyme in this reaction, and the pyruvate is formed at the N-terminus of the alpha chain, which is derived from the carboxyl end of the proenzyme. The post-translation cleavage follows an unusual pathway, termed non-hydrolytic serinolysis, in which the side chain hydroxyl group of the serine supplies its oxygen atom to form the C-terminus of the beta chain, while the remainder of the serine residue undergoes an oxidative deamination to produce ammonia and the pyruvoyl prosthetic group on the alpha chain.</text>
</comment>
<comment type="similarity">
    <text evidence="1">Belongs to the phosphatidylserine decarboxylase family. PSD-A subfamily.</text>
</comment>
<dbReference type="EC" id="4.1.1.65" evidence="1"/>
<dbReference type="EMBL" id="CP000235">
    <property type="protein sequence ID" value="ABD43741.1"/>
    <property type="molecule type" value="Genomic_DNA"/>
</dbReference>
<dbReference type="RefSeq" id="WP_011450657.1">
    <property type="nucleotide sequence ID" value="NC_007797.1"/>
</dbReference>
<dbReference type="SMR" id="Q2GKG5"/>
<dbReference type="STRING" id="212042.APH_0544"/>
<dbReference type="PaxDb" id="212042-APH_0544"/>
<dbReference type="EnsemblBacteria" id="ABD43741">
    <property type="protein sequence ID" value="ABD43741"/>
    <property type="gene ID" value="APH_0544"/>
</dbReference>
<dbReference type="KEGG" id="aph:APH_0544"/>
<dbReference type="eggNOG" id="COG0688">
    <property type="taxonomic scope" value="Bacteria"/>
</dbReference>
<dbReference type="HOGENOM" id="CLU_072492_0_0_5"/>
<dbReference type="UniPathway" id="UPA00558">
    <property type="reaction ID" value="UER00616"/>
</dbReference>
<dbReference type="Proteomes" id="UP000001943">
    <property type="component" value="Chromosome"/>
</dbReference>
<dbReference type="GO" id="GO:0005886">
    <property type="term" value="C:plasma membrane"/>
    <property type="evidence" value="ECO:0007669"/>
    <property type="project" value="UniProtKB-SubCell"/>
</dbReference>
<dbReference type="GO" id="GO:0004609">
    <property type="term" value="F:phosphatidylserine decarboxylase activity"/>
    <property type="evidence" value="ECO:0007669"/>
    <property type="project" value="UniProtKB-UniRule"/>
</dbReference>
<dbReference type="GO" id="GO:0006646">
    <property type="term" value="P:phosphatidylethanolamine biosynthetic process"/>
    <property type="evidence" value="ECO:0007669"/>
    <property type="project" value="UniProtKB-UniRule"/>
</dbReference>
<dbReference type="HAMAP" id="MF_00664">
    <property type="entry name" value="PS_decarb_PSD_A"/>
    <property type="match status" value="1"/>
</dbReference>
<dbReference type="InterPro" id="IPR003817">
    <property type="entry name" value="PS_Dcarbxylase"/>
</dbReference>
<dbReference type="InterPro" id="IPR033175">
    <property type="entry name" value="PSD-A"/>
</dbReference>
<dbReference type="NCBIfam" id="NF003678">
    <property type="entry name" value="PRK05305.1-2"/>
    <property type="match status" value="1"/>
</dbReference>
<dbReference type="NCBIfam" id="NF003684">
    <property type="entry name" value="PRK05305.2-4"/>
    <property type="match status" value="1"/>
</dbReference>
<dbReference type="NCBIfam" id="NF003685">
    <property type="entry name" value="PRK05305.2-5"/>
    <property type="match status" value="1"/>
</dbReference>
<dbReference type="PANTHER" id="PTHR35809">
    <property type="entry name" value="ARCHAETIDYLSERINE DECARBOXYLASE PROENZYME-RELATED"/>
    <property type="match status" value="1"/>
</dbReference>
<dbReference type="PANTHER" id="PTHR35809:SF1">
    <property type="entry name" value="ARCHAETIDYLSERINE DECARBOXYLASE PROENZYME-RELATED"/>
    <property type="match status" value="1"/>
</dbReference>
<dbReference type="Pfam" id="PF02666">
    <property type="entry name" value="PS_Dcarbxylase"/>
    <property type="match status" value="1"/>
</dbReference>
<keyword id="KW-1003">Cell membrane</keyword>
<keyword id="KW-0210">Decarboxylase</keyword>
<keyword id="KW-0444">Lipid biosynthesis</keyword>
<keyword id="KW-0443">Lipid metabolism</keyword>
<keyword id="KW-0456">Lyase</keyword>
<keyword id="KW-0472">Membrane</keyword>
<keyword id="KW-0594">Phospholipid biosynthesis</keyword>
<keyword id="KW-1208">Phospholipid metabolism</keyword>
<keyword id="KW-0670">Pyruvate</keyword>
<keyword id="KW-0865">Zymogen</keyword>
<name>PSD_ANAPZ</name>
<evidence type="ECO:0000255" key="1">
    <source>
        <dbReference type="HAMAP-Rule" id="MF_00664"/>
    </source>
</evidence>
<reference key="1">
    <citation type="journal article" date="2006" name="PLoS Genet.">
        <title>Comparative genomics of emerging human ehrlichiosis agents.</title>
        <authorList>
            <person name="Dunning Hotopp J.C."/>
            <person name="Lin M."/>
            <person name="Madupu R."/>
            <person name="Crabtree J."/>
            <person name="Angiuoli S.V."/>
            <person name="Eisen J.A."/>
            <person name="Seshadri R."/>
            <person name="Ren Q."/>
            <person name="Wu M."/>
            <person name="Utterback T.R."/>
            <person name="Smith S."/>
            <person name="Lewis M."/>
            <person name="Khouri H."/>
            <person name="Zhang C."/>
            <person name="Niu H."/>
            <person name="Lin Q."/>
            <person name="Ohashi N."/>
            <person name="Zhi N."/>
            <person name="Nelson W.C."/>
            <person name="Brinkac L.M."/>
            <person name="Dodson R.J."/>
            <person name="Rosovitz M.J."/>
            <person name="Sundaram J.P."/>
            <person name="Daugherty S.C."/>
            <person name="Davidsen T."/>
            <person name="Durkin A.S."/>
            <person name="Gwinn M.L."/>
            <person name="Haft D.H."/>
            <person name="Selengut J.D."/>
            <person name="Sullivan S.A."/>
            <person name="Zafar N."/>
            <person name="Zhou L."/>
            <person name="Benahmed F."/>
            <person name="Forberger H."/>
            <person name="Halpin R."/>
            <person name="Mulligan S."/>
            <person name="Robinson J."/>
            <person name="White O."/>
            <person name="Rikihisa Y."/>
            <person name="Tettelin H."/>
        </authorList>
    </citation>
    <scope>NUCLEOTIDE SEQUENCE [LARGE SCALE GENOMIC DNA]</scope>
    <source>
        <strain>HZ</strain>
    </source>
</reference>
<protein>
    <recommendedName>
        <fullName evidence="1">Phosphatidylserine decarboxylase proenzyme</fullName>
        <ecNumber evidence="1">4.1.1.65</ecNumber>
    </recommendedName>
    <component>
        <recommendedName>
            <fullName evidence="1">Phosphatidylserine decarboxylase alpha chain</fullName>
        </recommendedName>
    </component>
    <component>
        <recommendedName>
            <fullName evidence="1">Phosphatidylserine decarboxylase beta chain</fullName>
        </recommendedName>
    </component>
</protein>
<gene>
    <name evidence="1" type="primary">psd</name>
    <name type="ordered locus">APH_0544</name>
</gene>
<organism>
    <name type="scientific">Anaplasma phagocytophilum (strain HZ)</name>
    <dbReference type="NCBI Taxonomy" id="212042"/>
    <lineage>
        <taxon>Bacteria</taxon>
        <taxon>Pseudomonadati</taxon>
        <taxon>Pseudomonadota</taxon>
        <taxon>Alphaproteobacteria</taxon>
        <taxon>Rickettsiales</taxon>
        <taxon>Anaplasmataceae</taxon>
        <taxon>Anaplasma</taxon>
        <taxon>phagocytophilum group</taxon>
    </lineage>
</organism>
<proteinExistence type="inferred from homology"/>
<feature type="chain" id="PRO_0000262181" description="Phosphatidylserine decarboxylase beta chain" evidence="1">
    <location>
        <begin position="1"/>
        <end position="180"/>
    </location>
</feature>
<feature type="chain" id="PRO_0000262182" description="Phosphatidylserine decarboxylase alpha chain" evidence="1">
    <location>
        <begin position="181"/>
        <end position="227"/>
    </location>
</feature>
<feature type="active site" description="Schiff-base intermediate with substrate; via pyruvic acid" evidence="1">
    <location>
        <position position="181"/>
    </location>
</feature>
<feature type="site" description="Cleavage (non-hydrolytic); by autocatalysis" evidence="1">
    <location>
        <begin position="180"/>
        <end position="181"/>
    </location>
</feature>
<feature type="modified residue" description="Pyruvic acid (Ser); by autocatalysis" evidence="1">
    <location>
        <position position="181"/>
    </location>
</feature>
<sequence>MCFPNIHKQGYPFIAIAFVLTCIGFAFSFGLGLVFQIITVLCACFFRNPDRIVPVDDKLIISPADGLVTSVAEVESPIEAGKMVTRVSVFLSILNVHVNRAPVSGSVKLVEHRPGRFSPACTDGSTSENERVRSVIESTFGNHNIVIEQVAGVLARRIVCDLKVGDNVKLGSRMGIIRFGSRVNVYVPAGVPVLVTEGHTLVGGETVIADLDSERTAGYPRATFEKV</sequence>